<evidence type="ECO:0000255" key="1">
    <source>
        <dbReference type="HAMAP-Rule" id="MF_02005"/>
    </source>
</evidence>
<name>SYV_RICRS</name>
<reference key="1">
    <citation type="submission" date="2007-09" db="EMBL/GenBank/DDBJ databases">
        <title>Complete genome sequence of Rickettsia rickettsii.</title>
        <authorList>
            <person name="Madan A."/>
            <person name="Fahey J."/>
            <person name="Helton E."/>
            <person name="Ketteman M."/>
            <person name="Madan A."/>
            <person name="Rodrigues S."/>
            <person name="Sanchez A."/>
            <person name="Dasch G."/>
            <person name="Eremeeva M."/>
        </authorList>
    </citation>
    <scope>NUCLEOTIDE SEQUENCE [LARGE SCALE GENOMIC DNA]</scope>
    <source>
        <strain>Sheila Smith</strain>
    </source>
</reference>
<accession>A8GTB4</accession>
<organism>
    <name type="scientific">Rickettsia rickettsii (strain Sheila Smith)</name>
    <dbReference type="NCBI Taxonomy" id="392021"/>
    <lineage>
        <taxon>Bacteria</taxon>
        <taxon>Pseudomonadati</taxon>
        <taxon>Pseudomonadota</taxon>
        <taxon>Alphaproteobacteria</taxon>
        <taxon>Rickettsiales</taxon>
        <taxon>Rickettsiaceae</taxon>
        <taxon>Rickettsieae</taxon>
        <taxon>Rickettsia</taxon>
        <taxon>spotted fever group</taxon>
    </lineage>
</organism>
<dbReference type="EC" id="6.1.1.9" evidence="1"/>
<dbReference type="EMBL" id="CP000848">
    <property type="protein sequence ID" value="ABV76639.1"/>
    <property type="molecule type" value="Genomic_DNA"/>
</dbReference>
<dbReference type="RefSeq" id="WP_012151193.1">
    <property type="nucleotide sequence ID" value="NZ_CP121767.1"/>
</dbReference>
<dbReference type="SMR" id="A8GTB4"/>
<dbReference type="GeneID" id="79937710"/>
<dbReference type="KEGG" id="rri:A1G_05850"/>
<dbReference type="HOGENOM" id="CLU_001493_0_2_5"/>
<dbReference type="Proteomes" id="UP000006832">
    <property type="component" value="Chromosome"/>
</dbReference>
<dbReference type="GO" id="GO:0005829">
    <property type="term" value="C:cytosol"/>
    <property type="evidence" value="ECO:0007669"/>
    <property type="project" value="TreeGrafter"/>
</dbReference>
<dbReference type="GO" id="GO:0002161">
    <property type="term" value="F:aminoacyl-tRNA deacylase activity"/>
    <property type="evidence" value="ECO:0007669"/>
    <property type="project" value="InterPro"/>
</dbReference>
<dbReference type="GO" id="GO:0005524">
    <property type="term" value="F:ATP binding"/>
    <property type="evidence" value="ECO:0007669"/>
    <property type="project" value="UniProtKB-UniRule"/>
</dbReference>
<dbReference type="GO" id="GO:0004832">
    <property type="term" value="F:valine-tRNA ligase activity"/>
    <property type="evidence" value="ECO:0007669"/>
    <property type="project" value="UniProtKB-UniRule"/>
</dbReference>
<dbReference type="GO" id="GO:0006438">
    <property type="term" value="P:valyl-tRNA aminoacylation"/>
    <property type="evidence" value="ECO:0007669"/>
    <property type="project" value="UniProtKB-UniRule"/>
</dbReference>
<dbReference type="CDD" id="cd07962">
    <property type="entry name" value="Anticodon_Ia_Val"/>
    <property type="match status" value="1"/>
</dbReference>
<dbReference type="FunFam" id="1.10.730.10:FF:000033">
    <property type="entry name" value="Valine--tRNA ligase"/>
    <property type="match status" value="1"/>
</dbReference>
<dbReference type="FunFam" id="3.40.50.620:FF:000380">
    <property type="entry name" value="Valine--tRNA ligase"/>
    <property type="match status" value="1"/>
</dbReference>
<dbReference type="Gene3D" id="3.40.50.620">
    <property type="entry name" value="HUPs"/>
    <property type="match status" value="2"/>
</dbReference>
<dbReference type="Gene3D" id="1.10.730.10">
    <property type="entry name" value="Isoleucyl-tRNA Synthetase, Domain 1"/>
    <property type="match status" value="1"/>
</dbReference>
<dbReference type="HAMAP" id="MF_02005">
    <property type="entry name" value="Val_tRNA_synth_type2"/>
    <property type="match status" value="1"/>
</dbReference>
<dbReference type="InterPro" id="IPR001412">
    <property type="entry name" value="aa-tRNA-synth_I_CS"/>
</dbReference>
<dbReference type="InterPro" id="IPR002300">
    <property type="entry name" value="aa-tRNA-synth_Ia"/>
</dbReference>
<dbReference type="InterPro" id="IPR033705">
    <property type="entry name" value="Anticodon_Ia_Val"/>
</dbReference>
<dbReference type="InterPro" id="IPR013155">
    <property type="entry name" value="M/V/L/I-tRNA-synth_anticd-bd"/>
</dbReference>
<dbReference type="InterPro" id="IPR014729">
    <property type="entry name" value="Rossmann-like_a/b/a_fold"/>
</dbReference>
<dbReference type="InterPro" id="IPR009080">
    <property type="entry name" value="tRNAsynth_Ia_anticodon-bd"/>
</dbReference>
<dbReference type="InterPro" id="IPR009008">
    <property type="entry name" value="Val/Leu/Ile-tRNA-synth_edit"/>
</dbReference>
<dbReference type="InterPro" id="IPR022874">
    <property type="entry name" value="Valine-tRNA_ligase_type_2"/>
</dbReference>
<dbReference type="InterPro" id="IPR002303">
    <property type="entry name" value="Valyl-tRNA_ligase"/>
</dbReference>
<dbReference type="NCBIfam" id="NF009687">
    <property type="entry name" value="PRK13208.1"/>
    <property type="match status" value="1"/>
</dbReference>
<dbReference type="NCBIfam" id="TIGR00422">
    <property type="entry name" value="valS"/>
    <property type="match status" value="1"/>
</dbReference>
<dbReference type="PANTHER" id="PTHR11946:SF93">
    <property type="entry name" value="VALINE--TRNA LIGASE, CHLOROPLASTIC_MITOCHONDRIAL 2"/>
    <property type="match status" value="1"/>
</dbReference>
<dbReference type="PANTHER" id="PTHR11946">
    <property type="entry name" value="VALYL-TRNA SYNTHETASES"/>
    <property type="match status" value="1"/>
</dbReference>
<dbReference type="Pfam" id="PF08264">
    <property type="entry name" value="Anticodon_1"/>
    <property type="match status" value="1"/>
</dbReference>
<dbReference type="Pfam" id="PF00133">
    <property type="entry name" value="tRNA-synt_1"/>
    <property type="match status" value="1"/>
</dbReference>
<dbReference type="PRINTS" id="PR00986">
    <property type="entry name" value="TRNASYNTHVAL"/>
</dbReference>
<dbReference type="SUPFAM" id="SSF47323">
    <property type="entry name" value="Anticodon-binding domain of a subclass of class I aminoacyl-tRNA synthetases"/>
    <property type="match status" value="1"/>
</dbReference>
<dbReference type="SUPFAM" id="SSF52374">
    <property type="entry name" value="Nucleotidylyl transferase"/>
    <property type="match status" value="1"/>
</dbReference>
<dbReference type="SUPFAM" id="SSF50677">
    <property type="entry name" value="ValRS/IleRS/LeuRS editing domain"/>
    <property type="match status" value="1"/>
</dbReference>
<dbReference type="PROSITE" id="PS00178">
    <property type="entry name" value="AA_TRNA_LIGASE_I"/>
    <property type="match status" value="1"/>
</dbReference>
<keyword id="KW-0030">Aminoacyl-tRNA synthetase</keyword>
<keyword id="KW-0067">ATP-binding</keyword>
<keyword id="KW-0963">Cytoplasm</keyword>
<keyword id="KW-0436">Ligase</keyword>
<keyword id="KW-0547">Nucleotide-binding</keyword>
<keyword id="KW-0648">Protein biosynthesis</keyword>
<comment type="function">
    <text evidence="1">Catalyzes the attachment of valine to tRNA(Val). As ValRS can inadvertently accommodate and process structurally similar amino acids such as threonine, to avoid such errors, it has a 'posttransfer' editing activity that hydrolyzes mischarged Thr-tRNA(Val) in a tRNA-dependent manner.</text>
</comment>
<comment type="catalytic activity">
    <reaction evidence="1">
        <text>tRNA(Val) + L-valine + ATP = L-valyl-tRNA(Val) + AMP + diphosphate</text>
        <dbReference type="Rhea" id="RHEA:10704"/>
        <dbReference type="Rhea" id="RHEA-COMP:9672"/>
        <dbReference type="Rhea" id="RHEA-COMP:9708"/>
        <dbReference type="ChEBI" id="CHEBI:30616"/>
        <dbReference type="ChEBI" id="CHEBI:33019"/>
        <dbReference type="ChEBI" id="CHEBI:57762"/>
        <dbReference type="ChEBI" id="CHEBI:78442"/>
        <dbReference type="ChEBI" id="CHEBI:78537"/>
        <dbReference type="ChEBI" id="CHEBI:456215"/>
        <dbReference type="EC" id="6.1.1.9"/>
    </reaction>
</comment>
<comment type="subunit">
    <text evidence="1">Monomer.</text>
</comment>
<comment type="subcellular location">
    <subcellularLocation>
        <location evidence="1">Cytoplasm</location>
    </subcellularLocation>
</comment>
<comment type="domain">
    <text evidence="1">ValRS has two distinct active sites: one for aminoacylation and one for editing. The misactivated threonine is translocated from the active site to the editing site.</text>
</comment>
<comment type="similarity">
    <text evidence="1">Belongs to the class-I aminoacyl-tRNA synthetase family. ValS type 2 subfamily.</text>
</comment>
<gene>
    <name evidence="1" type="primary">valS</name>
    <name type="ordered locus">A1G_05850</name>
</gene>
<feature type="chain" id="PRO_1000022185" description="Valine--tRNA ligase">
    <location>
        <begin position="1"/>
        <end position="812"/>
    </location>
</feature>
<feature type="short sequence motif" description="'HIGH' region">
    <location>
        <begin position="46"/>
        <end position="56"/>
    </location>
</feature>
<feature type="short sequence motif" description="'KMSKS' region">
    <location>
        <begin position="536"/>
        <end position="540"/>
    </location>
</feature>
<feature type="binding site" evidence="1">
    <location>
        <position position="539"/>
    </location>
    <ligand>
        <name>ATP</name>
        <dbReference type="ChEBI" id="CHEBI:30616"/>
    </ligand>
</feature>
<sequence length="812" mass="94266">MKEFPKNYNFTENEKKWQQIWQEKQIYAYNPNVAKEETYVIDTPPPTVSGQLHIGHVYSYTQTDFIVRFQRMMGKNIFYPMGFDDNGLPTERLVEKQKQIKAYNMERSEFIKICEEVVESEEEKFRSLFNQIALSVDWSLEYQTISPLSRKISQMSFLDLVQKEEIYRTNQPILWDPVDGTALAQADIEDKEQTSFMNYITFKTEQGDPLTIATTRPELLPACVAVFYHPDDGRYKHLAGKSAITPLFNEQVPLLADPLVRQDKGTGLVMCCTFGDQTDITWWKTHNLPLKTIITKKGTIDCQHETSIDGLKIKEARTKIIAILKEQELLIKQEDITHTVKCAERSGAPLEILTVPQWFVKTISHKEELLKRANELNWHPKNMKIRLENWINAISWDWCISRQRYFGVPFPVWYSKRVGEEGKILYADITQLPIDPLKDLPMGYSKEEVEPDYDVMDTWATSSVSPQLSTHGISDDFAVNKDRHDKLFPMDLRPQAHEIIRTWAFYTILKAHLHQNTLPWKNIMISGWCLAEDRSKMSKSKGNVLVPEKLLEQYGSDVIRYWSANSKLGADTAYSEDVMKNGKRLVNKLWSAAKFVFIHFDKLKGEDKKASLLDIKEKITNEFDKWMVNKLVELVKLATNELQNYEYANAMHLTEKFFWVVFCDNYLEISKTRSYDEEHKNPQGQYSSILTLYHVMQTLLKLFAPFMPHITEELYQILYSENSIHVKGSWVNYSDLNYEINAKGAEGLLEILDIVRKFKAEKNLSIKAPIKLLEVSGIVLSAELAEDLKNVTSADEIQFEMKDDKIKVNIIL</sequence>
<protein>
    <recommendedName>
        <fullName evidence="1">Valine--tRNA ligase</fullName>
        <ecNumber evidence="1">6.1.1.9</ecNumber>
    </recommendedName>
    <alternativeName>
        <fullName evidence="1">Valyl-tRNA synthetase</fullName>
        <shortName evidence="1">ValRS</shortName>
    </alternativeName>
</protein>
<proteinExistence type="inferred from homology"/>